<organism>
    <name type="scientific">Thermus thermophilus (strain ATCC 27634 / DSM 579 / HB8)</name>
    <dbReference type="NCBI Taxonomy" id="300852"/>
    <lineage>
        <taxon>Bacteria</taxon>
        <taxon>Thermotogati</taxon>
        <taxon>Deinococcota</taxon>
        <taxon>Deinococci</taxon>
        <taxon>Thermales</taxon>
        <taxon>Thermaceae</taxon>
        <taxon>Thermus</taxon>
    </lineage>
</organism>
<sequence>MLRFAVLGHPVAHSLSPAMHAFALESLGLEGSYEAWDTPLEALPGRLKEVRRAFRGVNLTLPLKEAALAHLDWVSPEAQRIGAVNTVLQVEGRLFGFNTDAPGFLEALKAGGIPLKGPALVLGAGGAGRAVAFALREAGLEVWVWNRTPQRALALAEEFGLRAVPLEKAREARLLVNATRVGLEDPSASPLPAELFPEEGAAVDLVYRPLWTRFLREAKAKGLKVQTGLPMLAWQGALAFRLWTGLLPDPSGMEEAARRALGV</sequence>
<comment type="function">
    <text evidence="1">Involved in the biosynthesis of the chorismate, which leads to the biosynthesis of aromatic amino acids. Catalyzes the reversible NADPH linked reduction of 3-dehydroshikimate (DHSA) to yield shikimate (SA).</text>
</comment>
<comment type="catalytic activity">
    <reaction evidence="1">
        <text>shikimate + NADP(+) = 3-dehydroshikimate + NADPH + H(+)</text>
        <dbReference type="Rhea" id="RHEA:17737"/>
        <dbReference type="ChEBI" id="CHEBI:15378"/>
        <dbReference type="ChEBI" id="CHEBI:16630"/>
        <dbReference type="ChEBI" id="CHEBI:36208"/>
        <dbReference type="ChEBI" id="CHEBI:57783"/>
        <dbReference type="ChEBI" id="CHEBI:58349"/>
        <dbReference type="EC" id="1.1.1.25"/>
    </reaction>
</comment>
<comment type="pathway">
    <text evidence="1">Metabolic intermediate biosynthesis; chorismate biosynthesis; chorismate from D-erythrose 4-phosphate and phosphoenolpyruvate: step 4/7.</text>
</comment>
<comment type="subunit">
    <text evidence="1 2">Homodimer.</text>
</comment>
<comment type="similarity">
    <text evidence="1">Belongs to the shikimate dehydrogenase family.</text>
</comment>
<gene>
    <name evidence="1" type="primary">aroE</name>
    <name type="ordered locus">TTHA1050</name>
</gene>
<feature type="chain" id="PRO_1000078133" description="Shikimate dehydrogenase (NADP(+))">
    <location>
        <begin position="1"/>
        <end position="263"/>
    </location>
</feature>
<feature type="active site" description="Proton acceptor" evidence="1 2">
    <location>
        <position position="64"/>
    </location>
</feature>
<feature type="binding site" evidence="1 2">
    <location>
        <begin position="14"/>
        <end position="16"/>
    </location>
    <ligand>
        <name>shikimate</name>
        <dbReference type="ChEBI" id="CHEBI:36208"/>
    </ligand>
</feature>
<feature type="binding site" evidence="1 2">
    <location>
        <position position="60"/>
    </location>
    <ligand>
        <name>shikimate</name>
        <dbReference type="ChEBI" id="CHEBI:36208"/>
    </ligand>
</feature>
<feature type="binding site" evidence="1 2">
    <location>
        <position position="85"/>
    </location>
    <ligand>
        <name>shikimate</name>
        <dbReference type="ChEBI" id="CHEBI:36208"/>
    </ligand>
</feature>
<feature type="binding site" evidence="1 2">
    <location>
        <position position="100"/>
    </location>
    <ligand>
        <name>shikimate</name>
        <dbReference type="ChEBI" id="CHEBI:36208"/>
    </ligand>
</feature>
<feature type="binding site" evidence="1 2">
    <location>
        <begin position="123"/>
        <end position="127"/>
    </location>
    <ligand>
        <name>NADP(+)</name>
        <dbReference type="ChEBI" id="CHEBI:58349"/>
    </ligand>
</feature>
<feature type="binding site" evidence="1 2">
    <location>
        <begin position="146"/>
        <end position="151"/>
    </location>
    <ligand>
        <name>NADP(+)</name>
        <dbReference type="ChEBI" id="CHEBI:58349"/>
    </ligand>
</feature>
<feature type="binding site" evidence="1 2">
    <location>
        <position position="205"/>
    </location>
    <ligand>
        <name>NADP(+)</name>
        <dbReference type="ChEBI" id="CHEBI:58349"/>
    </ligand>
</feature>
<feature type="binding site" evidence="1 2">
    <location>
        <position position="207"/>
    </location>
    <ligand>
        <name>shikimate</name>
        <dbReference type="ChEBI" id="CHEBI:36208"/>
    </ligand>
</feature>
<feature type="binding site" evidence="1 2">
    <location>
        <position position="228"/>
    </location>
    <ligand>
        <name>NADP(+)</name>
        <dbReference type="ChEBI" id="CHEBI:58349"/>
    </ligand>
</feature>
<feature type="binding site" evidence="1 2">
    <location>
        <position position="235"/>
    </location>
    <ligand>
        <name>shikimate</name>
        <dbReference type="ChEBI" id="CHEBI:36208"/>
    </ligand>
</feature>
<feature type="strand" evidence="3">
    <location>
        <begin position="2"/>
        <end position="10"/>
    </location>
</feature>
<feature type="helix" evidence="3">
    <location>
        <begin position="16"/>
        <end position="26"/>
    </location>
</feature>
<feature type="strand" evidence="3">
    <location>
        <begin position="31"/>
        <end position="37"/>
    </location>
</feature>
<feature type="helix" evidence="3">
    <location>
        <begin position="40"/>
        <end position="42"/>
    </location>
</feature>
<feature type="helix" evidence="3">
    <location>
        <begin position="43"/>
        <end position="53"/>
    </location>
</feature>
<feature type="strand" evidence="3">
    <location>
        <begin position="55"/>
        <end position="59"/>
    </location>
</feature>
<feature type="turn" evidence="4">
    <location>
        <begin position="61"/>
        <end position="65"/>
    </location>
</feature>
<feature type="helix" evidence="3">
    <location>
        <begin position="66"/>
        <end position="70"/>
    </location>
</feature>
<feature type="strand" evidence="3">
    <location>
        <begin position="72"/>
        <end position="74"/>
    </location>
</feature>
<feature type="helix" evidence="3">
    <location>
        <begin position="76"/>
        <end position="81"/>
    </location>
</feature>
<feature type="strand" evidence="3">
    <location>
        <begin position="86"/>
        <end position="90"/>
    </location>
</feature>
<feature type="strand" evidence="3">
    <location>
        <begin position="93"/>
        <end position="97"/>
    </location>
</feature>
<feature type="helix" evidence="3">
    <location>
        <begin position="100"/>
        <end position="110"/>
    </location>
</feature>
<feature type="strand" evidence="3">
    <location>
        <begin position="119"/>
        <end position="122"/>
    </location>
</feature>
<feature type="helix" evidence="3">
    <location>
        <begin position="126"/>
        <end position="137"/>
    </location>
</feature>
<feature type="strand" evidence="3">
    <location>
        <begin position="142"/>
        <end position="145"/>
    </location>
</feature>
<feature type="helix" evidence="3">
    <location>
        <begin position="149"/>
        <end position="159"/>
    </location>
</feature>
<feature type="helix" evidence="3">
    <location>
        <begin position="166"/>
        <end position="171"/>
    </location>
</feature>
<feature type="strand" evidence="3">
    <location>
        <begin position="173"/>
        <end position="177"/>
    </location>
</feature>
<feature type="turn" evidence="3">
    <location>
        <begin position="181"/>
        <end position="184"/>
    </location>
</feature>
<feature type="helix" evidence="3">
    <location>
        <begin position="193"/>
        <end position="195"/>
    </location>
</feature>
<feature type="strand" evidence="3">
    <location>
        <begin position="198"/>
        <end position="205"/>
    </location>
</feature>
<feature type="strand" evidence="3">
    <location>
        <begin position="208"/>
        <end position="211"/>
    </location>
</feature>
<feature type="helix" evidence="3">
    <location>
        <begin position="213"/>
        <end position="220"/>
    </location>
</feature>
<feature type="strand" evidence="3">
    <location>
        <begin position="224"/>
        <end position="226"/>
    </location>
</feature>
<feature type="helix" evidence="3">
    <location>
        <begin position="229"/>
        <end position="244"/>
    </location>
</feature>
<feature type="helix" evidence="3">
    <location>
        <begin position="250"/>
        <end position="260"/>
    </location>
</feature>
<reference key="1">
    <citation type="submission" date="2004-11" db="EMBL/GenBank/DDBJ databases">
        <title>Complete genome sequence of Thermus thermophilus HB8.</title>
        <authorList>
            <person name="Masui R."/>
            <person name="Kurokawa K."/>
            <person name="Nakagawa N."/>
            <person name="Tokunaga F."/>
            <person name="Koyama Y."/>
            <person name="Shibata T."/>
            <person name="Oshima T."/>
            <person name="Yokoyama S."/>
            <person name="Yasunaga T."/>
            <person name="Kuramitsu S."/>
        </authorList>
    </citation>
    <scope>NUCLEOTIDE SEQUENCE [LARGE SCALE GENOMIC DNA]</scope>
    <source>
        <strain>ATCC 27634 / DSM 579 / HB8</strain>
    </source>
</reference>
<reference key="2">
    <citation type="journal article" date="2007" name="J. Mol. Biol.">
        <title>Crystal structures of shikimate dehydrogenase AroE from Thermus thermophilus HB8 and its cofactor and substrate complexes: insights into the enzymatic mechanism.</title>
        <authorList>
            <person name="Bagautdinov B."/>
            <person name="Kunishima N."/>
        </authorList>
    </citation>
    <scope>X-RAY CRYSTALLOGRAPHY (2.1 ANGSTROMS) IN COMPLEX WITH SHIKIMATE AND NADP</scope>
    <scope>REACTION MECHANISM</scope>
    <scope>ACTIVE SITE</scope>
    <scope>SUBUNIT</scope>
    <source>
        <strain>ATCC 27634 / DSM 579 / HB8</strain>
    </source>
</reference>
<keyword id="KW-0002">3D-structure</keyword>
<keyword id="KW-0028">Amino-acid biosynthesis</keyword>
<keyword id="KW-0057">Aromatic amino acid biosynthesis</keyword>
<keyword id="KW-0521">NADP</keyword>
<keyword id="KW-0560">Oxidoreductase</keyword>
<keyword id="KW-1185">Reference proteome</keyword>
<evidence type="ECO:0000255" key="1">
    <source>
        <dbReference type="HAMAP-Rule" id="MF_00222"/>
    </source>
</evidence>
<evidence type="ECO:0000269" key="2">
    <source>
    </source>
</evidence>
<evidence type="ECO:0007829" key="3">
    <source>
        <dbReference type="PDB" id="2D5C"/>
    </source>
</evidence>
<evidence type="ECO:0007829" key="4">
    <source>
        <dbReference type="PDB" id="2EV9"/>
    </source>
</evidence>
<protein>
    <recommendedName>
        <fullName evidence="1">Shikimate dehydrogenase (NADP(+))</fullName>
        <shortName evidence="1">SDH</shortName>
        <ecNumber evidence="1">1.1.1.25</ecNumber>
    </recommendedName>
</protein>
<dbReference type="EC" id="1.1.1.25" evidence="1"/>
<dbReference type="EMBL" id="AP008226">
    <property type="protein sequence ID" value="BAD70873.1"/>
    <property type="molecule type" value="Genomic_DNA"/>
</dbReference>
<dbReference type="RefSeq" id="WP_011228401.1">
    <property type="nucleotide sequence ID" value="NC_006461.1"/>
</dbReference>
<dbReference type="RefSeq" id="YP_144316.1">
    <property type="nucleotide sequence ID" value="NC_006461.1"/>
</dbReference>
<dbReference type="PDB" id="1WXD">
    <property type="method" value="X-ray"/>
    <property type="resolution" value="2.10 A"/>
    <property type="chains" value="A/B=1-263"/>
</dbReference>
<dbReference type="PDB" id="2CY0">
    <property type="method" value="X-ray"/>
    <property type="resolution" value="1.90 A"/>
    <property type="chains" value="A/B=1-263"/>
</dbReference>
<dbReference type="PDB" id="2D5C">
    <property type="method" value="X-ray"/>
    <property type="resolution" value="1.65 A"/>
    <property type="chains" value="A/B=1-263"/>
</dbReference>
<dbReference type="PDB" id="2EV9">
    <property type="method" value="X-ray"/>
    <property type="resolution" value="1.90 A"/>
    <property type="chains" value="A/B=1-263"/>
</dbReference>
<dbReference type="PDBsum" id="1WXD"/>
<dbReference type="PDBsum" id="2CY0"/>
<dbReference type="PDBsum" id="2D5C"/>
<dbReference type="PDBsum" id="2EV9"/>
<dbReference type="SMR" id="Q5SJF8"/>
<dbReference type="EnsemblBacteria" id="BAD70873">
    <property type="protein sequence ID" value="BAD70873"/>
    <property type="gene ID" value="BAD70873"/>
</dbReference>
<dbReference type="GeneID" id="3169915"/>
<dbReference type="KEGG" id="ttj:TTHA1050"/>
<dbReference type="PATRIC" id="fig|300852.9.peg.1030"/>
<dbReference type="eggNOG" id="COG0169">
    <property type="taxonomic scope" value="Bacteria"/>
</dbReference>
<dbReference type="HOGENOM" id="CLU_044063_0_1_0"/>
<dbReference type="PhylomeDB" id="Q5SJF8"/>
<dbReference type="BRENDA" id="1.1.1.25">
    <property type="organism ID" value="2305"/>
</dbReference>
<dbReference type="UniPathway" id="UPA00053">
    <property type="reaction ID" value="UER00087"/>
</dbReference>
<dbReference type="EvolutionaryTrace" id="Q5SJF8"/>
<dbReference type="Proteomes" id="UP000000532">
    <property type="component" value="Chromosome"/>
</dbReference>
<dbReference type="GO" id="GO:0005829">
    <property type="term" value="C:cytosol"/>
    <property type="evidence" value="ECO:0007669"/>
    <property type="project" value="TreeGrafter"/>
</dbReference>
<dbReference type="GO" id="GO:0050661">
    <property type="term" value="F:NADP binding"/>
    <property type="evidence" value="ECO:0000314"/>
    <property type="project" value="UniProtKB"/>
</dbReference>
<dbReference type="GO" id="GO:0004764">
    <property type="term" value="F:shikimate 3-dehydrogenase (NADP+) activity"/>
    <property type="evidence" value="ECO:0007669"/>
    <property type="project" value="UniProtKB-UniRule"/>
</dbReference>
<dbReference type="GO" id="GO:0008652">
    <property type="term" value="P:amino acid biosynthetic process"/>
    <property type="evidence" value="ECO:0007669"/>
    <property type="project" value="UniProtKB-KW"/>
</dbReference>
<dbReference type="GO" id="GO:0009073">
    <property type="term" value="P:aromatic amino acid family biosynthetic process"/>
    <property type="evidence" value="ECO:0007669"/>
    <property type="project" value="UniProtKB-KW"/>
</dbReference>
<dbReference type="GO" id="GO:0009423">
    <property type="term" value="P:chorismate biosynthetic process"/>
    <property type="evidence" value="ECO:0007669"/>
    <property type="project" value="UniProtKB-UniRule"/>
</dbReference>
<dbReference type="GO" id="GO:0019632">
    <property type="term" value="P:shikimate metabolic process"/>
    <property type="evidence" value="ECO:0007669"/>
    <property type="project" value="InterPro"/>
</dbReference>
<dbReference type="CDD" id="cd01065">
    <property type="entry name" value="NAD_bind_Shikimate_DH"/>
    <property type="match status" value="1"/>
</dbReference>
<dbReference type="FunFam" id="3.40.50.720:FF:000086">
    <property type="entry name" value="Quinate/shikimate dehydrogenase"/>
    <property type="match status" value="1"/>
</dbReference>
<dbReference type="Gene3D" id="3.40.50.10860">
    <property type="entry name" value="Leucine Dehydrogenase, chain A, domain 1"/>
    <property type="match status" value="1"/>
</dbReference>
<dbReference type="Gene3D" id="3.40.50.720">
    <property type="entry name" value="NAD(P)-binding Rossmann-like Domain"/>
    <property type="match status" value="1"/>
</dbReference>
<dbReference type="HAMAP" id="MF_00222">
    <property type="entry name" value="Shikimate_DH_AroE"/>
    <property type="match status" value="1"/>
</dbReference>
<dbReference type="InterPro" id="IPR046346">
    <property type="entry name" value="Aminoacid_DH-like_N_sf"/>
</dbReference>
<dbReference type="InterPro" id="IPR036291">
    <property type="entry name" value="NAD(P)-bd_dom_sf"/>
</dbReference>
<dbReference type="InterPro" id="IPR041121">
    <property type="entry name" value="SDH_C"/>
</dbReference>
<dbReference type="InterPro" id="IPR011342">
    <property type="entry name" value="Shikimate_DH"/>
</dbReference>
<dbReference type="InterPro" id="IPR013708">
    <property type="entry name" value="Shikimate_DH-bd_N"/>
</dbReference>
<dbReference type="InterPro" id="IPR022893">
    <property type="entry name" value="Shikimate_DH_fam"/>
</dbReference>
<dbReference type="InterPro" id="IPR006151">
    <property type="entry name" value="Shikm_DH/Glu-tRNA_Rdtase"/>
</dbReference>
<dbReference type="NCBIfam" id="TIGR00507">
    <property type="entry name" value="aroE"/>
    <property type="match status" value="1"/>
</dbReference>
<dbReference type="PANTHER" id="PTHR21089:SF1">
    <property type="entry name" value="BIFUNCTIONAL 3-DEHYDROQUINATE DEHYDRATASE_SHIKIMATE DEHYDROGENASE, CHLOROPLASTIC"/>
    <property type="match status" value="1"/>
</dbReference>
<dbReference type="PANTHER" id="PTHR21089">
    <property type="entry name" value="SHIKIMATE DEHYDROGENASE"/>
    <property type="match status" value="1"/>
</dbReference>
<dbReference type="Pfam" id="PF18317">
    <property type="entry name" value="SDH_C"/>
    <property type="match status" value="1"/>
</dbReference>
<dbReference type="Pfam" id="PF01488">
    <property type="entry name" value="Shikimate_DH"/>
    <property type="match status" value="1"/>
</dbReference>
<dbReference type="Pfam" id="PF08501">
    <property type="entry name" value="Shikimate_dh_N"/>
    <property type="match status" value="1"/>
</dbReference>
<dbReference type="SUPFAM" id="SSF53223">
    <property type="entry name" value="Aminoacid dehydrogenase-like, N-terminal domain"/>
    <property type="match status" value="1"/>
</dbReference>
<dbReference type="SUPFAM" id="SSF51735">
    <property type="entry name" value="NAD(P)-binding Rossmann-fold domains"/>
    <property type="match status" value="1"/>
</dbReference>
<accession>Q5SJF8</accession>
<name>AROE_THET8</name>
<proteinExistence type="evidence at protein level"/>